<comment type="function">
    <text evidence="4 5">Plasma membrane progesterone (P4) receptor coupled to G proteins (PubMed:23161870, PubMed:23763432). Seems to act through a G(s) mediated pathway (PubMed:23161870). May be involved in regulating rapid P4 signaling in the nervous system (PubMed:23763432). Also binds dehydroepiandrosterone (DHEA), pregnanolone, pregnenolone and allopregnanolone (PubMed:23161870).</text>
</comment>
<comment type="subunit">
    <text evidence="4">Homodimer.</text>
</comment>
<comment type="subcellular location">
    <subcellularLocation>
        <location evidence="4">Cell membrane</location>
        <topology evidence="1">Multi-pass membrane protein</topology>
    </subcellularLocation>
</comment>
<comment type="tissue specificity">
    <text evidence="3 4">Expression levels vary widely in a range of tissues (PubMed:16044242). Expressed in the brain, at high level in the pituitary gland and also in hypothalamus, limbic system, caudate nucleus accumens, pons and olfactory bulb (PubMed:23161870).</text>
</comment>
<comment type="miscellaneous">
    <text evidence="5">Non-classical progesterone receptors involved in extranuclear signaling are classified in 2 groups: the class II progestin and adipoQ receptor (PAQR) family (also called mPRs) (PAQR5, PAQR6, PAQR7, PAQR8 and PAQR9) and the b5-like heme/steroid-binding protein family (also called MAPRs) (PGRMC1, PGRMC2, NENF and CYB5D2).</text>
</comment>
<comment type="similarity">
    <text evidence="6">Belongs to the ADIPOR family.</text>
</comment>
<dbReference type="EMBL" id="AY424287">
    <property type="protein sequence ID" value="AAR08375.1"/>
    <property type="molecule type" value="mRNA"/>
</dbReference>
<dbReference type="EMBL" id="AK123932">
    <property type="protein sequence ID" value="BAC85729.1"/>
    <property type="molecule type" value="mRNA"/>
</dbReference>
<dbReference type="EMBL" id="BC118666">
    <property type="protein sequence ID" value="AAI18667.1"/>
    <property type="molecule type" value="mRNA"/>
</dbReference>
<dbReference type="EMBL" id="BC122527">
    <property type="protein sequence ID" value="AAI22528.1"/>
    <property type="molecule type" value="mRNA"/>
</dbReference>
<dbReference type="CCDS" id="CCDS3128.1"/>
<dbReference type="RefSeq" id="NP_940906.1">
    <property type="nucleotide sequence ID" value="NM_198504.4"/>
</dbReference>
<dbReference type="SMR" id="Q6ZVX9"/>
<dbReference type="BioGRID" id="131327">
    <property type="interactions" value="10"/>
</dbReference>
<dbReference type="FunCoup" id="Q6ZVX9">
    <property type="interactions" value="403"/>
</dbReference>
<dbReference type="STRING" id="9606.ENSP00000341564"/>
<dbReference type="iPTMnet" id="Q6ZVX9"/>
<dbReference type="PhosphoSitePlus" id="Q6ZVX9"/>
<dbReference type="BioMuta" id="PAQR9"/>
<dbReference type="DMDM" id="51701778"/>
<dbReference type="MassIVE" id="Q6ZVX9"/>
<dbReference type="PaxDb" id="9606-ENSP00000341564"/>
<dbReference type="PeptideAtlas" id="Q6ZVX9"/>
<dbReference type="ProteomicsDB" id="68448"/>
<dbReference type="Antibodypedia" id="57880">
    <property type="antibodies" value="8 antibodies from 7 providers"/>
</dbReference>
<dbReference type="DNASU" id="344838"/>
<dbReference type="Ensembl" id="ENST00000340634.6">
    <property type="protein sequence ID" value="ENSP00000341564.4"/>
    <property type="gene ID" value="ENSG00000188582.10"/>
</dbReference>
<dbReference type="GeneID" id="344838"/>
<dbReference type="KEGG" id="hsa:344838"/>
<dbReference type="MANE-Select" id="ENST00000340634.6">
    <property type="protein sequence ID" value="ENSP00000341564.4"/>
    <property type="RefSeq nucleotide sequence ID" value="NM_198504.4"/>
    <property type="RefSeq protein sequence ID" value="NP_940906.1"/>
</dbReference>
<dbReference type="UCSC" id="uc003evg.5">
    <property type="organism name" value="human"/>
</dbReference>
<dbReference type="AGR" id="HGNC:30131"/>
<dbReference type="CTD" id="344838"/>
<dbReference type="DisGeNET" id="344838"/>
<dbReference type="GeneCards" id="PAQR9"/>
<dbReference type="HGNC" id="HGNC:30131">
    <property type="gene designation" value="PAQR9"/>
</dbReference>
<dbReference type="HPA" id="ENSG00000188582">
    <property type="expression patterns" value="Group enriched (bone marrow, heart muscle, liver, retina, testis)"/>
</dbReference>
<dbReference type="MIM" id="614580">
    <property type="type" value="gene"/>
</dbReference>
<dbReference type="neXtProt" id="NX_Q6ZVX9"/>
<dbReference type="OpenTargets" id="ENSG00000188582"/>
<dbReference type="PharmGKB" id="PA134880790"/>
<dbReference type="VEuPathDB" id="HostDB:ENSG00000188582"/>
<dbReference type="eggNOG" id="KOG0748">
    <property type="taxonomic scope" value="Eukaryota"/>
</dbReference>
<dbReference type="GeneTree" id="ENSGT00940000162334"/>
<dbReference type="HOGENOM" id="CLU_052356_1_0_1"/>
<dbReference type="InParanoid" id="Q6ZVX9"/>
<dbReference type="OMA" id="RSEWCAY"/>
<dbReference type="OrthoDB" id="529367at2759"/>
<dbReference type="PAN-GO" id="Q6ZVX9">
    <property type="GO annotations" value="1 GO annotation based on evolutionary models"/>
</dbReference>
<dbReference type="PhylomeDB" id="Q6ZVX9"/>
<dbReference type="TreeFam" id="TF319738"/>
<dbReference type="PathwayCommons" id="Q6ZVX9"/>
<dbReference type="BioGRID-ORCS" id="344838">
    <property type="hits" value="12 hits in 1141 CRISPR screens"/>
</dbReference>
<dbReference type="GenomeRNAi" id="344838"/>
<dbReference type="Pharos" id="Q6ZVX9">
    <property type="development level" value="Tdark"/>
</dbReference>
<dbReference type="PRO" id="PR:Q6ZVX9"/>
<dbReference type="Proteomes" id="UP000005640">
    <property type="component" value="Chromosome 3"/>
</dbReference>
<dbReference type="RNAct" id="Q6ZVX9">
    <property type="molecule type" value="protein"/>
</dbReference>
<dbReference type="Bgee" id="ENSG00000188582">
    <property type="expression patterns" value="Expressed in sperm and 64 other cell types or tissues"/>
</dbReference>
<dbReference type="ExpressionAtlas" id="Q6ZVX9">
    <property type="expression patterns" value="baseline and differential"/>
</dbReference>
<dbReference type="GO" id="GO:0005886">
    <property type="term" value="C:plasma membrane"/>
    <property type="evidence" value="ECO:0007669"/>
    <property type="project" value="UniProtKB-SubCell"/>
</dbReference>
<dbReference type="GO" id="GO:0038023">
    <property type="term" value="F:signaling receptor activity"/>
    <property type="evidence" value="ECO:0000318"/>
    <property type="project" value="GO_Central"/>
</dbReference>
<dbReference type="GO" id="GO:0005496">
    <property type="term" value="F:steroid binding"/>
    <property type="evidence" value="ECO:0007669"/>
    <property type="project" value="UniProtKB-KW"/>
</dbReference>
<dbReference type="InterPro" id="IPR004254">
    <property type="entry name" value="AdipoR/HlyIII-related"/>
</dbReference>
<dbReference type="PANTHER" id="PTHR20855">
    <property type="entry name" value="ADIPOR/PROGESTIN RECEPTOR-RELATED"/>
    <property type="match status" value="1"/>
</dbReference>
<dbReference type="PANTHER" id="PTHR20855:SF143">
    <property type="entry name" value="MEMBRANE PROGESTIN RECEPTOR EPSILON"/>
    <property type="match status" value="1"/>
</dbReference>
<dbReference type="Pfam" id="PF03006">
    <property type="entry name" value="HlyIII"/>
    <property type="match status" value="1"/>
</dbReference>
<keyword id="KW-1003">Cell membrane</keyword>
<keyword id="KW-0446">Lipid-binding</keyword>
<keyword id="KW-0472">Membrane</keyword>
<keyword id="KW-1267">Proteomics identification</keyword>
<keyword id="KW-0675">Receptor</keyword>
<keyword id="KW-1185">Reference proteome</keyword>
<keyword id="KW-0754">Steroid-binding</keyword>
<keyword id="KW-0812">Transmembrane</keyword>
<keyword id="KW-1133">Transmembrane helix</keyword>
<sequence>MPRRLQPRGAGTKGPPAPAPAASGAARNSHSAASRDPPASAKPLLRWDEVPDDFVECFILSGYRRLPCTAQECLASVLKPTNETLNFWTHFIPLLLFLSKFCRLFFLSGGDVPFHHPWLLPLWCYASGVLLTFAMSCTAHVFSCLSLRLRAAFFYLDYASISYYGFGSTVAYYYYLLPGLSLLDARVMTPYLQQRLGWHVDCTRLIAAYRALVLPVAFVLAVACTVACCKSRTDWCTYPFALRTFVFVMPLSMACPIMLESWLFDLRGENPTLFVHFYRRYFWLVVAAFFNVSKIPERIQPGLFDIIGHSHQLFHIFTFLSIYDQVYYVEEGLRQFLQAPPAAPTFSGTVGYMLLLVVCLGLVIRKFLNSSEFCSKK</sequence>
<reference key="1">
    <citation type="journal article" date="2005" name="J. Mol. Evol.">
        <title>PAQR proteins: a novel membrane receptor family defined by an ancient 7-transmembrane pass motif.</title>
        <authorList>
            <person name="Tang Y.T."/>
            <person name="Hu T."/>
            <person name="Arterburn M."/>
            <person name="Boyle B."/>
            <person name="Bright J.M."/>
            <person name="Emtage P.C."/>
            <person name="Funk W.D."/>
        </authorList>
    </citation>
    <scope>NUCLEOTIDE SEQUENCE [MRNA]</scope>
    <scope>TISSUE SPECIFICITY</scope>
</reference>
<reference key="2">
    <citation type="journal article" date="2004" name="Nat. Genet.">
        <title>Complete sequencing and characterization of 21,243 full-length human cDNAs.</title>
        <authorList>
            <person name="Ota T."/>
            <person name="Suzuki Y."/>
            <person name="Nishikawa T."/>
            <person name="Otsuki T."/>
            <person name="Sugiyama T."/>
            <person name="Irie R."/>
            <person name="Wakamatsu A."/>
            <person name="Hayashi K."/>
            <person name="Sato H."/>
            <person name="Nagai K."/>
            <person name="Kimura K."/>
            <person name="Makita H."/>
            <person name="Sekine M."/>
            <person name="Obayashi M."/>
            <person name="Nishi T."/>
            <person name="Shibahara T."/>
            <person name="Tanaka T."/>
            <person name="Ishii S."/>
            <person name="Yamamoto J."/>
            <person name="Saito K."/>
            <person name="Kawai Y."/>
            <person name="Isono Y."/>
            <person name="Nakamura Y."/>
            <person name="Nagahari K."/>
            <person name="Murakami K."/>
            <person name="Yasuda T."/>
            <person name="Iwayanagi T."/>
            <person name="Wagatsuma M."/>
            <person name="Shiratori A."/>
            <person name="Sudo H."/>
            <person name="Hosoiri T."/>
            <person name="Kaku Y."/>
            <person name="Kodaira H."/>
            <person name="Kondo H."/>
            <person name="Sugawara M."/>
            <person name="Takahashi M."/>
            <person name="Kanda K."/>
            <person name="Yokoi T."/>
            <person name="Furuya T."/>
            <person name="Kikkawa E."/>
            <person name="Omura Y."/>
            <person name="Abe K."/>
            <person name="Kamihara K."/>
            <person name="Katsuta N."/>
            <person name="Sato K."/>
            <person name="Tanikawa M."/>
            <person name="Yamazaki M."/>
            <person name="Ninomiya K."/>
            <person name="Ishibashi T."/>
            <person name="Yamashita H."/>
            <person name="Murakawa K."/>
            <person name="Fujimori K."/>
            <person name="Tanai H."/>
            <person name="Kimata M."/>
            <person name="Watanabe M."/>
            <person name="Hiraoka S."/>
            <person name="Chiba Y."/>
            <person name="Ishida S."/>
            <person name="Ono Y."/>
            <person name="Takiguchi S."/>
            <person name="Watanabe S."/>
            <person name="Yosida M."/>
            <person name="Hotuta T."/>
            <person name="Kusano J."/>
            <person name="Kanehori K."/>
            <person name="Takahashi-Fujii A."/>
            <person name="Hara H."/>
            <person name="Tanase T.-O."/>
            <person name="Nomura Y."/>
            <person name="Togiya S."/>
            <person name="Komai F."/>
            <person name="Hara R."/>
            <person name="Takeuchi K."/>
            <person name="Arita M."/>
            <person name="Imose N."/>
            <person name="Musashino K."/>
            <person name="Yuuki H."/>
            <person name="Oshima A."/>
            <person name="Sasaki N."/>
            <person name="Aotsuka S."/>
            <person name="Yoshikawa Y."/>
            <person name="Matsunawa H."/>
            <person name="Ichihara T."/>
            <person name="Shiohata N."/>
            <person name="Sano S."/>
            <person name="Moriya S."/>
            <person name="Momiyama H."/>
            <person name="Satoh N."/>
            <person name="Takami S."/>
            <person name="Terashima Y."/>
            <person name="Suzuki O."/>
            <person name="Nakagawa S."/>
            <person name="Senoh A."/>
            <person name="Mizoguchi H."/>
            <person name="Goto Y."/>
            <person name="Shimizu F."/>
            <person name="Wakebe H."/>
            <person name="Hishigaki H."/>
            <person name="Watanabe T."/>
            <person name="Sugiyama A."/>
            <person name="Takemoto M."/>
            <person name="Kawakami B."/>
            <person name="Yamazaki M."/>
            <person name="Watanabe K."/>
            <person name="Kumagai A."/>
            <person name="Itakura S."/>
            <person name="Fukuzumi Y."/>
            <person name="Fujimori Y."/>
            <person name="Komiyama M."/>
            <person name="Tashiro H."/>
            <person name="Tanigami A."/>
            <person name="Fujiwara T."/>
            <person name="Ono T."/>
            <person name="Yamada K."/>
            <person name="Fujii Y."/>
            <person name="Ozaki K."/>
            <person name="Hirao M."/>
            <person name="Ohmori Y."/>
            <person name="Kawabata A."/>
            <person name="Hikiji T."/>
            <person name="Kobatake N."/>
            <person name="Inagaki H."/>
            <person name="Ikema Y."/>
            <person name="Okamoto S."/>
            <person name="Okitani R."/>
            <person name="Kawakami T."/>
            <person name="Noguchi S."/>
            <person name="Itoh T."/>
            <person name="Shigeta K."/>
            <person name="Senba T."/>
            <person name="Matsumura K."/>
            <person name="Nakajima Y."/>
            <person name="Mizuno T."/>
            <person name="Morinaga M."/>
            <person name="Sasaki M."/>
            <person name="Togashi T."/>
            <person name="Oyama M."/>
            <person name="Hata H."/>
            <person name="Watanabe M."/>
            <person name="Komatsu T."/>
            <person name="Mizushima-Sugano J."/>
            <person name="Satoh T."/>
            <person name="Shirai Y."/>
            <person name="Takahashi Y."/>
            <person name="Nakagawa K."/>
            <person name="Okumura K."/>
            <person name="Nagase T."/>
            <person name="Nomura N."/>
            <person name="Kikuchi H."/>
            <person name="Masuho Y."/>
            <person name="Yamashita R."/>
            <person name="Nakai K."/>
            <person name="Yada T."/>
            <person name="Nakamura Y."/>
            <person name="Ohara O."/>
            <person name="Isogai T."/>
            <person name="Sugano S."/>
        </authorList>
    </citation>
    <scope>NUCLEOTIDE SEQUENCE [LARGE SCALE MRNA]</scope>
    <source>
        <tissue>Pericardium</tissue>
    </source>
</reference>
<reference key="3">
    <citation type="journal article" date="2004" name="Genome Res.">
        <title>The status, quality, and expansion of the NIH full-length cDNA project: the Mammalian Gene Collection (MGC).</title>
        <authorList>
            <consortium name="The MGC Project Team"/>
        </authorList>
    </citation>
    <scope>NUCLEOTIDE SEQUENCE [LARGE SCALE MRNA]</scope>
</reference>
<reference key="4">
    <citation type="journal article" date="2013" name="Endocrinology">
        <title>Characterization, neurosteroid binding and brain distribution of human membrane progesterone receptors delta and {epsilon} (mPRdelta and mPR{epsilon}) and mPRdelta involvement in neurosteroid inhibition of apoptosis.</title>
        <authorList>
            <person name="Pang Y."/>
            <person name="Dong J."/>
            <person name="Thomas P."/>
        </authorList>
    </citation>
    <scope>FUNCTION</scope>
    <scope>TISSUE SPECIFICITY</scope>
    <scope>SUBCELLULAR LOCATION</scope>
    <scope>SUBUNIT</scope>
</reference>
<reference key="5">
    <citation type="journal article" date="2013" name="J. Neuroendocrinol.">
        <title>Nonclassical progesterone signalling molecules in the nervous system.</title>
        <authorList>
            <person name="Petersen S.L."/>
            <person name="Intlekofer K.A."/>
            <person name="Moura-Conlon P.J."/>
            <person name="Brewer D.N."/>
            <person name="Del Pino Sans J."/>
            <person name="Lopez J.A."/>
        </authorList>
    </citation>
    <scope>FUNCTION</scope>
    <scope>REVIEW</scope>
</reference>
<name>PAQR9_HUMAN</name>
<feature type="chain" id="PRO_0000218852" description="Membrane progestin receptor epsilon">
    <location>
        <begin position="1"/>
        <end position="377"/>
    </location>
</feature>
<feature type="topological domain" description="Cytoplasmic" evidence="1">
    <location>
        <begin position="1"/>
        <end position="86"/>
    </location>
</feature>
<feature type="transmembrane region" description="Helical" evidence="1">
    <location>
        <begin position="87"/>
        <end position="107"/>
    </location>
</feature>
<feature type="topological domain" description="Extracellular" evidence="1">
    <location>
        <begin position="108"/>
        <end position="116"/>
    </location>
</feature>
<feature type="transmembrane region" description="Helical" evidence="1">
    <location>
        <begin position="117"/>
        <end position="137"/>
    </location>
</feature>
<feature type="topological domain" description="Cytoplasmic" evidence="1">
    <location>
        <begin position="138"/>
        <end position="162"/>
    </location>
</feature>
<feature type="transmembrane region" description="Helical" evidence="1">
    <location>
        <begin position="163"/>
        <end position="183"/>
    </location>
</feature>
<feature type="topological domain" description="Extracellular" evidence="1">
    <location>
        <begin position="184"/>
        <end position="205"/>
    </location>
</feature>
<feature type="transmembrane region" description="Helical" evidence="1">
    <location>
        <begin position="206"/>
        <end position="226"/>
    </location>
</feature>
<feature type="topological domain" description="Cytoplasmic" evidence="1">
    <location>
        <begin position="227"/>
        <end position="243"/>
    </location>
</feature>
<feature type="transmembrane region" description="Helical" evidence="1">
    <location>
        <begin position="244"/>
        <end position="264"/>
    </location>
</feature>
<feature type="topological domain" description="Extracellular" evidence="1">
    <location>
        <begin position="265"/>
        <end position="301"/>
    </location>
</feature>
<feature type="transmembrane region" description="Helical" evidence="1">
    <location>
        <begin position="302"/>
        <end position="322"/>
    </location>
</feature>
<feature type="topological domain" description="Cytoplasmic" evidence="1">
    <location>
        <begin position="323"/>
        <end position="343"/>
    </location>
</feature>
<feature type="transmembrane region" description="Helical" evidence="1">
    <location>
        <begin position="344"/>
        <end position="364"/>
    </location>
</feature>
<feature type="topological domain" description="Extracellular" evidence="1">
    <location>
        <begin position="365"/>
        <end position="377"/>
    </location>
</feature>
<feature type="region of interest" description="Disordered" evidence="2">
    <location>
        <begin position="1"/>
        <end position="40"/>
    </location>
</feature>
<feature type="compositionally biased region" description="Low complexity" evidence="2">
    <location>
        <begin position="9"/>
        <end position="26"/>
    </location>
</feature>
<organism>
    <name type="scientific">Homo sapiens</name>
    <name type="common">Human</name>
    <dbReference type="NCBI Taxonomy" id="9606"/>
    <lineage>
        <taxon>Eukaryota</taxon>
        <taxon>Metazoa</taxon>
        <taxon>Chordata</taxon>
        <taxon>Craniata</taxon>
        <taxon>Vertebrata</taxon>
        <taxon>Euteleostomi</taxon>
        <taxon>Mammalia</taxon>
        <taxon>Eutheria</taxon>
        <taxon>Euarchontoglires</taxon>
        <taxon>Primates</taxon>
        <taxon>Haplorrhini</taxon>
        <taxon>Catarrhini</taxon>
        <taxon>Hominidae</taxon>
        <taxon>Homo</taxon>
    </lineage>
</organism>
<protein>
    <recommendedName>
        <fullName evidence="5">Membrane progestin receptor epsilon</fullName>
        <shortName evidence="5">mPR epsilon</shortName>
    </recommendedName>
    <alternativeName>
        <fullName evidence="5">Membrane progesterone P4 receptor epsilon</fullName>
    </alternativeName>
    <alternativeName>
        <fullName evidence="5">Membrane progesterone receptor epsilon</fullName>
    </alternativeName>
    <alternativeName>
        <fullName>Progesterone and adipoQ receptor family member 9</fullName>
    </alternativeName>
    <alternativeName>
        <fullName>Progestin and adipoQ receptor family member 9</fullName>
    </alternativeName>
    <alternativeName>
        <fullName>Progestin and adipoQ receptor family member IX</fullName>
    </alternativeName>
</protein>
<accession>Q6ZVX9</accession>
<accession>Q147T6</accession>
<evidence type="ECO:0000255" key="1"/>
<evidence type="ECO:0000256" key="2">
    <source>
        <dbReference type="SAM" id="MobiDB-lite"/>
    </source>
</evidence>
<evidence type="ECO:0000269" key="3">
    <source>
    </source>
</evidence>
<evidence type="ECO:0000269" key="4">
    <source>
    </source>
</evidence>
<evidence type="ECO:0000303" key="5">
    <source>
    </source>
</evidence>
<evidence type="ECO:0000305" key="6"/>
<evidence type="ECO:0000312" key="7">
    <source>
        <dbReference type="HGNC" id="HGNC:30131"/>
    </source>
</evidence>
<gene>
    <name evidence="7" type="primary">PAQR9</name>
</gene>
<proteinExistence type="evidence at protein level"/>